<accession>Q9NU39</accession>
<accession>B3KWN1</accession>
<accession>B9EGF3</accession>
<dbReference type="EMBL" id="AF452723">
    <property type="protein sequence ID" value="AAN64908.1"/>
    <property type="molecule type" value="mRNA"/>
</dbReference>
<dbReference type="EMBL" id="AY344639">
    <property type="protein sequence ID" value="AAQ76877.1"/>
    <property type="molecule type" value="mRNA"/>
</dbReference>
<dbReference type="EMBL" id="AK125398">
    <property type="protein sequence ID" value="BAG54193.1"/>
    <property type="molecule type" value="mRNA"/>
</dbReference>
<dbReference type="EMBL" id="AL078621">
    <property type="status" value="NOT_ANNOTATED_CDS"/>
    <property type="molecule type" value="Genomic_DNA"/>
</dbReference>
<dbReference type="EMBL" id="BC136428">
    <property type="protein sequence ID" value="AAI36429.1"/>
    <property type="molecule type" value="mRNA"/>
</dbReference>
<dbReference type="CCDS" id="CCDS2117.1"/>
<dbReference type="RefSeq" id="NP_036316.1">
    <property type="nucleotide sequence ID" value="NM_012184.5"/>
</dbReference>
<dbReference type="SMR" id="Q9NU39"/>
<dbReference type="BioGRID" id="128321">
    <property type="interactions" value="43"/>
</dbReference>
<dbReference type="FunCoup" id="Q9NU39">
    <property type="interactions" value="24"/>
</dbReference>
<dbReference type="IntAct" id="Q9NU39">
    <property type="interactions" value="28"/>
</dbReference>
<dbReference type="MINT" id="Q9NU39"/>
<dbReference type="STRING" id="9606.ENSP00000302756"/>
<dbReference type="GlyGen" id="Q9NU39">
    <property type="glycosylation" value="3 sites, 1 O-linked glycan (2 sites)"/>
</dbReference>
<dbReference type="iPTMnet" id="Q9NU39"/>
<dbReference type="PhosphoSitePlus" id="Q9NU39"/>
<dbReference type="BioMuta" id="FOXD4L1"/>
<dbReference type="DMDM" id="27923782"/>
<dbReference type="jPOST" id="Q9NU39"/>
<dbReference type="MassIVE" id="Q9NU39"/>
<dbReference type="PaxDb" id="9606-ENSP00000302756"/>
<dbReference type="PeptideAtlas" id="Q9NU39"/>
<dbReference type="ProteomicsDB" id="82653"/>
<dbReference type="Antibodypedia" id="59983">
    <property type="antibodies" value="124 antibodies from 24 providers"/>
</dbReference>
<dbReference type="DNASU" id="200350"/>
<dbReference type="Ensembl" id="ENST00000306507.7">
    <property type="protein sequence ID" value="ENSP00000302756.5"/>
    <property type="gene ID" value="ENSG00000184492.7"/>
</dbReference>
<dbReference type="GeneID" id="200350"/>
<dbReference type="KEGG" id="hsa:200350"/>
<dbReference type="MANE-Select" id="ENST00000306507.7">
    <property type="protein sequence ID" value="ENSP00000302756.5"/>
    <property type="RefSeq nucleotide sequence ID" value="NM_012184.5"/>
    <property type="RefSeq protein sequence ID" value="NP_036316.1"/>
</dbReference>
<dbReference type="UCSC" id="uc002tjw.5">
    <property type="organism name" value="human"/>
</dbReference>
<dbReference type="AGR" id="HGNC:18521"/>
<dbReference type="CTD" id="200350"/>
<dbReference type="GeneCards" id="FOXD4L1"/>
<dbReference type="HGNC" id="HGNC:18521">
    <property type="gene designation" value="FOXD4L1"/>
</dbReference>
<dbReference type="HPA" id="ENSG00000184492">
    <property type="expression patterns" value="Tissue enhanced (brain, testis)"/>
</dbReference>
<dbReference type="MIM" id="611084">
    <property type="type" value="gene"/>
</dbReference>
<dbReference type="neXtProt" id="NX_Q9NU39"/>
<dbReference type="OpenTargets" id="ENSG00000184492"/>
<dbReference type="PharmGKB" id="PA134928763"/>
<dbReference type="VEuPathDB" id="HostDB:ENSG00000184492"/>
<dbReference type="eggNOG" id="KOG2294">
    <property type="taxonomic scope" value="Eukaryota"/>
</dbReference>
<dbReference type="GeneTree" id="ENSGT00940000163353"/>
<dbReference type="HOGENOM" id="CLU_040357_3_0_1"/>
<dbReference type="InParanoid" id="Q9NU39"/>
<dbReference type="OMA" id="CHLWHAP"/>
<dbReference type="OrthoDB" id="9537367at2759"/>
<dbReference type="PAN-GO" id="Q9NU39">
    <property type="GO annotations" value="5 GO annotations based on evolutionary models"/>
</dbReference>
<dbReference type="PhylomeDB" id="Q9NU39"/>
<dbReference type="TreeFam" id="TF316127"/>
<dbReference type="PathwayCommons" id="Q9NU39"/>
<dbReference type="SignaLink" id="Q9NU39"/>
<dbReference type="BioGRID-ORCS" id="200350">
    <property type="hits" value="55 hits in 708 CRISPR screens"/>
</dbReference>
<dbReference type="GenomeRNAi" id="200350"/>
<dbReference type="Pharos" id="Q9NU39">
    <property type="development level" value="Tdark"/>
</dbReference>
<dbReference type="PRO" id="PR:Q9NU39"/>
<dbReference type="Proteomes" id="UP000005640">
    <property type="component" value="Chromosome 2"/>
</dbReference>
<dbReference type="RNAct" id="Q9NU39">
    <property type="molecule type" value="protein"/>
</dbReference>
<dbReference type="Bgee" id="ENSG00000184492">
    <property type="expression patterns" value="Expressed in granulocyte and 48 other cell types or tissues"/>
</dbReference>
<dbReference type="GO" id="GO:0000785">
    <property type="term" value="C:chromatin"/>
    <property type="evidence" value="ECO:0000247"/>
    <property type="project" value="NTNU_SB"/>
</dbReference>
<dbReference type="GO" id="GO:0005634">
    <property type="term" value="C:nucleus"/>
    <property type="evidence" value="ECO:0007669"/>
    <property type="project" value="UniProtKB-SubCell"/>
</dbReference>
<dbReference type="GO" id="GO:0000981">
    <property type="term" value="F:DNA-binding transcription factor activity, RNA polymerase II-specific"/>
    <property type="evidence" value="ECO:0000247"/>
    <property type="project" value="NTNU_SB"/>
</dbReference>
<dbReference type="GO" id="GO:0000978">
    <property type="term" value="F:RNA polymerase II cis-regulatory region sequence-specific DNA binding"/>
    <property type="evidence" value="ECO:0000318"/>
    <property type="project" value="GO_Central"/>
</dbReference>
<dbReference type="GO" id="GO:0009653">
    <property type="term" value="P:anatomical structure morphogenesis"/>
    <property type="evidence" value="ECO:0000318"/>
    <property type="project" value="GO_Central"/>
</dbReference>
<dbReference type="GO" id="GO:0030154">
    <property type="term" value="P:cell differentiation"/>
    <property type="evidence" value="ECO:0000318"/>
    <property type="project" value="GO_Central"/>
</dbReference>
<dbReference type="GO" id="GO:0006357">
    <property type="term" value="P:regulation of transcription by RNA polymerase II"/>
    <property type="evidence" value="ECO:0000318"/>
    <property type="project" value="GO_Central"/>
</dbReference>
<dbReference type="CDD" id="cd20048">
    <property type="entry name" value="FH_FOXD4-like"/>
    <property type="match status" value="1"/>
</dbReference>
<dbReference type="FunFam" id="1.10.10.10:FF:000071">
    <property type="entry name" value="Forkhead box F1"/>
    <property type="match status" value="1"/>
</dbReference>
<dbReference type="Gene3D" id="1.10.10.10">
    <property type="entry name" value="Winged helix-like DNA-binding domain superfamily/Winged helix DNA-binding domain"/>
    <property type="match status" value="1"/>
</dbReference>
<dbReference type="InterPro" id="IPR001766">
    <property type="entry name" value="Fork_head_dom"/>
</dbReference>
<dbReference type="InterPro" id="IPR050211">
    <property type="entry name" value="FOX_domain-containing"/>
</dbReference>
<dbReference type="InterPro" id="IPR018122">
    <property type="entry name" value="TF_fork_head_CS_1"/>
</dbReference>
<dbReference type="InterPro" id="IPR030456">
    <property type="entry name" value="TF_fork_head_CS_2"/>
</dbReference>
<dbReference type="InterPro" id="IPR036388">
    <property type="entry name" value="WH-like_DNA-bd_sf"/>
</dbReference>
<dbReference type="InterPro" id="IPR036390">
    <property type="entry name" value="WH_DNA-bd_sf"/>
</dbReference>
<dbReference type="PANTHER" id="PTHR11829">
    <property type="entry name" value="FORKHEAD BOX PROTEIN"/>
    <property type="match status" value="1"/>
</dbReference>
<dbReference type="PANTHER" id="PTHR11829:SF361">
    <property type="entry name" value="FORKHEAD BOX PROTEIN D4-LIKE 1"/>
    <property type="match status" value="1"/>
</dbReference>
<dbReference type="Pfam" id="PF00250">
    <property type="entry name" value="Forkhead"/>
    <property type="match status" value="1"/>
</dbReference>
<dbReference type="PRINTS" id="PR00053">
    <property type="entry name" value="FORKHEAD"/>
</dbReference>
<dbReference type="SMART" id="SM00339">
    <property type="entry name" value="FH"/>
    <property type="match status" value="1"/>
</dbReference>
<dbReference type="SUPFAM" id="SSF46785">
    <property type="entry name" value="Winged helix' DNA-binding domain"/>
    <property type="match status" value="1"/>
</dbReference>
<dbReference type="PROSITE" id="PS00657">
    <property type="entry name" value="FORK_HEAD_1"/>
    <property type="match status" value="1"/>
</dbReference>
<dbReference type="PROSITE" id="PS00658">
    <property type="entry name" value="FORK_HEAD_2"/>
    <property type="match status" value="1"/>
</dbReference>
<dbReference type="PROSITE" id="PS50039">
    <property type="entry name" value="FORK_HEAD_3"/>
    <property type="match status" value="1"/>
</dbReference>
<feature type="chain" id="PRO_0000091824" description="Forkhead box protein D4-like 1">
    <location>
        <begin position="1"/>
        <end position="408"/>
    </location>
</feature>
<feature type="DNA-binding region" description="Fork-head" evidence="1">
    <location>
        <begin position="107"/>
        <end position="201"/>
    </location>
</feature>
<feature type="region of interest" description="Disordered" evidence="2">
    <location>
        <begin position="1"/>
        <end position="54"/>
    </location>
</feature>
<feature type="region of interest" description="Disordered" evidence="2">
    <location>
        <begin position="71"/>
        <end position="104"/>
    </location>
</feature>
<feature type="region of interest" description="Disordered" evidence="2">
    <location>
        <begin position="385"/>
        <end position="408"/>
    </location>
</feature>
<feature type="compositionally biased region" description="Basic and acidic residues" evidence="2">
    <location>
        <begin position="1"/>
        <end position="29"/>
    </location>
</feature>
<feature type="compositionally biased region" description="Acidic residues" evidence="2">
    <location>
        <begin position="30"/>
        <end position="45"/>
    </location>
</feature>
<feature type="compositionally biased region" description="Low complexity" evidence="2">
    <location>
        <begin position="389"/>
        <end position="401"/>
    </location>
</feature>
<feature type="sequence variant" id="VAR_059299" description="In dbSNP:rs9308683.">
    <original>V</original>
    <variation>I</variation>
    <location>
        <position position="29"/>
    </location>
</feature>
<name>FX4L1_HUMAN</name>
<gene>
    <name type="primary">FOXD4L1</name>
</gene>
<evidence type="ECO:0000255" key="1">
    <source>
        <dbReference type="PROSITE-ProRule" id="PRU00089"/>
    </source>
</evidence>
<evidence type="ECO:0000256" key="2">
    <source>
        <dbReference type="SAM" id="MobiDB-lite"/>
    </source>
</evidence>
<comment type="interaction">
    <interactant intactId="EBI-11320806">
        <id>Q9NU39</id>
    </interactant>
    <interactant intactId="EBI-11096309">
        <id>Q9NYB9-2</id>
        <label>ABI2</label>
    </interactant>
    <organismsDiffer>false</organismsDiffer>
    <experiments>3</experiments>
</comment>
<comment type="interaction">
    <interactant intactId="EBI-11320806">
        <id>Q9NU39</id>
    </interactant>
    <interactant intactId="EBI-747185">
        <id>O95817</id>
        <label>BAG3</label>
    </interactant>
    <organismsDiffer>false</organismsDiffer>
    <experiments>3</experiments>
</comment>
<comment type="interaction">
    <interactant intactId="EBI-11320806">
        <id>Q9NU39</id>
    </interactant>
    <interactant intactId="EBI-11983447">
        <id>Q8N9W6-4</id>
        <label>BOLL</label>
    </interactant>
    <organismsDiffer>false</organismsDiffer>
    <experiments>3</experiments>
</comment>
<comment type="interaction">
    <interactant intactId="EBI-11320806">
        <id>Q9NU39</id>
    </interactant>
    <interactant intactId="EBI-11530605">
        <id>Q9H257-2</id>
        <label>CARD9</label>
    </interactant>
    <organismsDiffer>false</organismsDiffer>
    <experiments>3</experiments>
</comment>
<comment type="interaction">
    <interactant intactId="EBI-11320806">
        <id>Q9NU39</id>
    </interactant>
    <interactant intactId="EBI-10961624">
        <id>Q2TAC2-2</id>
        <label>CCDC57</label>
    </interactant>
    <organismsDiffer>false</organismsDiffer>
    <experiments>3</experiments>
</comment>
<comment type="interaction">
    <interactant intactId="EBI-11320806">
        <id>Q9NU39</id>
    </interactant>
    <interactant intactId="EBI-3867333">
        <id>A8MQ03</id>
        <label>CYSRT1</label>
    </interactant>
    <organismsDiffer>false</organismsDiffer>
    <experiments>3</experiments>
</comment>
<comment type="interaction">
    <interactant intactId="EBI-11320806">
        <id>Q9NU39</id>
    </interactant>
    <interactant intactId="EBI-724310">
        <id>Q15038</id>
        <label>DAZAP2</label>
    </interactant>
    <organismsDiffer>false</organismsDiffer>
    <experiments>3</experiments>
</comment>
<comment type="interaction">
    <interactant intactId="EBI-11320806">
        <id>Q9NU39</id>
    </interactant>
    <interactant intactId="EBI-371922">
        <id>Q96B26</id>
        <label>EXOSC8</label>
    </interactant>
    <organismsDiffer>false</organismsDiffer>
    <experiments>3</experiments>
</comment>
<comment type="interaction">
    <interactant intactId="EBI-11320806">
        <id>Q9NU39</id>
    </interactant>
    <interactant intactId="EBI-473189">
        <id>Q96D09</id>
        <label>GPRASP2</label>
    </interactant>
    <organismsDiffer>false</organismsDiffer>
    <experiments>3</experiments>
</comment>
<comment type="interaction">
    <interactant intactId="EBI-11320806">
        <id>Q9NU39</id>
    </interactant>
    <interactant intactId="EBI-740220">
        <id>O14964</id>
        <label>HGS</label>
    </interactant>
    <organismsDiffer>false</organismsDiffer>
    <experiments>3</experiments>
</comment>
<comment type="interaction">
    <interactant intactId="EBI-11320806">
        <id>Q9NU39</id>
    </interactant>
    <interactant intactId="EBI-740641">
        <id>Q9NP66</id>
        <label>HMG20A</label>
    </interactant>
    <organismsDiffer>false</organismsDiffer>
    <experiments>3</experiments>
</comment>
<comment type="interaction">
    <interactant intactId="EBI-11320806">
        <id>Q9NU39</id>
    </interactant>
    <interactant intactId="EBI-7060731">
        <id>P61978-2</id>
        <label>HNRNPK</label>
    </interactant>
    <organismsDiffer>false</organismsDiffer>
    <experiments>5</experiments>
</comment>
<comment type="interaction">
    <interactant intactId="EBI-11320806">
        <id>Q9NU39</id>
    </interactant>
    <interactant intactId="EBI-1047093">
        <id>O76011</id>
        <label>KRT34</label>
    </interactant>
    <organismsDiffer>false</organismsDiffer>
    <experiments>3</experiments>
</comment>
<comment type="interaction">
    <interactant intactId="EBI-11320806">
        <id>Q9NU39</id>
    </interactant>
    <interactant intactId="EBI-10176379">
        <id>P59991</id>
        <label>KRTAP12-2</label>
    </interactant>
    <organismsDiffer>false</organismsDiffer>
    <experiments>3</experiments>
</comment>
<comment type="interaction">
    <interactant intactId="EBI-11320806">
        <id>Q9NU39</id>
    </interactant>
    <interactant intactId="EBI-11962084">
        <id>Q3LI66</id>
        <label>KRTAP6-2</label>
    </interactant>
    <organismsDiffer>false</organismsDiffer>
    <experiments>3</experiments>
</comment>
<comment type="interaction">
    <interactant intactId="EBI-11320806">
        <id>Q9NU39</id>
    </interactant>
    <interactant intactId="EBI-22311199">
        <id>Q3LI67</id>
        <label>KRTAP6-3</label>
    </interactant>
    <organismsDiffer>false</organismsDiffer>
    <experiments>3</experiments>
</comment>
<comment type="interaction">
    <interactant intactId="EBI-11320806">
        <id>Q9NU39</id>
    </interactant>
    <interactant intactId="EBI-726739">
        <id>Q9UPY8</id>
        <label>MAPRE3</label>
    </interactant>
    <organismsDiffer>false</organismsDiffer>
    <experiments>3</experiments>
</comment>
<comment type="interaction">
    <interactant intactId="EBI-11320806">
        <id>Q9NU39</id>
    </interactant>
    <interactant intactId="EBI-724076">
        <id>Q99750</id>
        <label>MDFI</label>
    </interactant>
    <organismsDiffer>false</organismsDiffer>
    <experiments>3</experiments>
</comment>
<comment type="interaction">
    <interactant intactId="EBI-11320806">
        <id>Q9NU39</id>
    </interactant>
    <interactant intactId="EBI-302345">
        <id>Q8ND90</id>
        <label>PNMA1</label>
    </interactant>
    <organismsDiffer>false</organismsDiffer>
    <experiments>3</experiments>
</comment>
<comment type="interaction">
    <interactant intactId="EBI-11320806">
        <id>Q9NU39</id>
    </interactant>
    <interactant intactId="EBI-11320284">
        <id>Q9NQX0</id>
        <label>PRDM6</label>
    </interactant>
    <organismsDiffer>false</organismsDiffer>
    <experiments>3</experiments>
</comment>
<comment type="interaction">
    <interactant intactId="EBI-11320806">
        <id>Q9NU39</id>
    </interactant>
    <interactant intactId="EBI-355546">
        <id>P61289</id>
        <label>PSME3</label>
    </interactant>
    <organismsDiffer>false</organismsDiffer>
    <experiments>3</experiments>
</comment>
<comment type="interaction">
    <interactant intactId="EBI-11320806">
        <id>Q9NU39</id>
    </interactant>
    <interactant intactId="EBI-11987469">
        <id>Q6ZRY4</id>
        <label>RBPMS2</label>
    </interactant>
    <organismsDiffer>false</organismsDiffer>
    <experiments>4</experiments>
</comment>
<comment type="interaction">
    <interactant intactId="EBI-11320806">
        <id>Q9NU39</id>
    </interactant>
    <interactant intactId="EBI-742327">
        <id>Q15654</id>
        <label>TRIP6</label>
    </interactant>
    <organismsDiffer>false</organismsDiffer>
    <experiments>3</experiments>
</comment>
<comment type="interaction">
    <interactant intactId="EBI-11320806">
        <id>Q9NU39</id>
    </interactant>
    <interactant intactId="EBI-12040603">
        <id>Q9NZC7-5</id>
        <label>WWOX</label>
    </interactant>
    <organismsDiffer>false</organismsDiffer>
    <experiments>3</experiments>
</comment>
<comment type="subcellular location">
    <subcellularLocation>
        <location evidence="1">Nucleus</location>
    </subcellularLocation>
</comment>
<organism>
    <name type="scientific">Homo sapiens</name>
    <name type="common">Human</name>
    <dbReference type="NCBI Taxonomy" id="9606"/>
    <lineage>
        <taxon>Eukaryota</taxon>
        <taxon>Metazoa</taxon>
        <taxon>Chordata</taxon>
        <taxon>Craniata</taxon>
        <taxon>Vertebrata</taxon>
        <taxon>Euteleostomi</taxon>
        <taxon>Mammalia</taxon>
        <taxon>Eutheria</taxon>
        <taxon>Euarchontoglires</taxon>
        <taxon>Primates</taxon>
        <taxon>Haplorrhini</taxon>
        <taxon>Catarrhini</taxon>
        <taxon>Hominidae</taxon>
        <taxon>Homo</taxon>
    </lineage>
</organism>
<sequence>MNLPRAERPRSTPQRSLRDSDGEDGKIDVLGEEEDEDEVEDEEEEASQKFLEQSLQPGLQVARWGGVALPREHIEGGGPSDPSEFGTEFRAPPRSAAASEDARQPAKPPYSYIALITMAILQSPHKRLTLSGICAFISGRFPYYRRKFPAWQNSIRHNLSLNDCFVKIPREPGHPGKGTYWSLDPASQDMFDNGSFLRRRKRFKRHQLTPGAHLPHPFPLPAAHAALHNPRPGPLLGAPALPQPVPGAYPNTAPGRRPYALLHPHPPRYLLLSAPAYAGAPKKAEGADLATPGTLPVLQPSLGPQPWEEGKGLASPPGGGCISFSIESIMQGVRGAGTGAAQSLSPTAWSYCPLLQRPSSLSDNFAATAAASGGGLRQRLRSHQGRGAGRAPVGRVGAAAVSGGGRGL</sequence>
<proteinExistence type="evidence at protein level"/>
<protein>
    <recommendedName>
        <fullName>Forkhead box protein D4-like 1</fullName>
        <shortName>FOXD4-like 1</shortName>
    </recommendedName>
</protein>
<reference key="1">
    <citation type="journal article" date="2002" name="Genome Res.">
        <title>Gene content and function of the ancestral chromosome fusion site in human chromosome 2q13-2q14.1 and paralogous regions.</title>
        <authorList>
            <person name="Fan Y."/>
            <person name="Newman T."/>
            <person name="Linardopoulou E."/>
            <person name="Trask B.J."/>
        </authorList>
    </citation>
    <scope>NUCLEOTIDE SEQUENCE [MRNA]</scope>
    <source>
        <tissue>Heart</tissue>
    </source>
</reference>
<reference key="2">
    <citation type="journal article" date="2004" name="Genomics">
        <title>Diverse fates of paralogs following segmental duplication of telomeric genes.</title>
        <authorList>
            <person name="Wong A."/>
            <person name="Vallender E.J."/>
            <person name="Heretis K."/>
            <person name="Ilkin Y."/>
            <person name="Lahn B.T."/>
            <person name="Lese Martin C."/>
            <person name="Ledbetter D.H."/>
        </authorList>
    </citation>
    <scope>NUCLEOTIDE SEQUENCE [MRNA]</scope>
</reference>
<reference key="3">
    <citation type="journal article" date="2004" name="Nat. Genet.">
        <title>Complete sequencing and characterization of 21,243 full-length human cDNAs.</title>
        <authorList>
            <person name="Ota T."/>
            <person name="Suzuki Y."/>
            <person name="Nishikawa T."/>
            <person name="Otsuki T."/>
            <person name="Sugiyama T."/>
            <person name="Irie R."/>
            <person name="Wakamatsu A."/>
            <person name="Hayashi K."/>
            <person name="Sato H."/>
            <person name="Nagai K."/>
            <person name="Kimura K."/>
            <person name="Makita H."/>
            <person name="Sekine M."/>
            <person name="Obayashi M."/>
            <person name="Nishi T."/>
            <person name="Shibahara T."/>
            <person name="Tanaka T."/>
            <person name="Ishii S."/>
            <person name="Yamamoto J."/>
            <person name="Saito K."/>
            <person name="Kawai Y."/>
            <person name="Isono Y."/>
            <person name="Nakamura Y."/>
            <person name="Nagahari K."/>
            <person name="Murakami K."/>
            <person name="Yasuda T."/>
            <person name="Iwayanagi T."/>
            <person name="Wagatsuma M."/>
            <person name="Shiratori A."/>
            <person name="Sudo H."/>
            <person name="Hosoiri T."/>
            <person name="Kaku Y."/>
            <person name="Kodaira H."/>
            <person name="Kondo H."/>
            <person name="Sugawara M."/>
            <person name="Takahashi M."/>
            <person name="Kanda K."/>
            <person name="Yokoi T."/>
            <person name="Furuya T."/>
            <person name="Kikkawa E."/>
            <person name="Omura Y."/>
            <person name="Abe K."/>
            <person name="Kamihara K."/>
            <person name="Katsuta N."/>
            <person name="Sato K."/>
            <person name="Tanikawa M."/>
            <person name="Yamazaki M."/>
            <person name="Ninomiya K."/>
            <person name="Ishibashi T."/>
            <person name="Yamashita H."/>
            <person name="Murakawa K."/>
            <person name="Fujimori K."/>
            <person name="Tanai H."/>
            <person name="Kimata M."/>
            <person name="Watanabe M."/>
            <person name="Hiraoka S."/>
            <person name="Chiba Y."/>
            <person name="Ishida S."/>
            <person name="Ono Y."/>
            <person name="Takiguchi S."/>
            <person name="Watanabe S."/>
            <person name="Yosida M."/>
            <person name="Hotuta T."/>
            <person name="Kusano J."/>
            <person name="Kanehori K."/>
            <person name="Takahashi-Fujii A."/>
            <person name="Hara H."/>
            <person name="Tanase T.-O."/>
            <person name="Nomura Y."/>
            <person name="Togiya S."/>
            <person name="Komai F."/>
            <person name="Hara R."/>
            <person name="Takeuchi K."/>
            <person name="Arita M."/>
            <person name="Imose N."/>
            <person name="Musashino K."/>
            <person name="Yuuki H."/>
            <person name="Oshima A."/>
            <person name="Sasaki N."/>
            <person name="Aotsuka S."/>
            <person name="Yoshikawa Y."/>
            <person name="Matsunawa H."/>
            <person name="Ichihara T."/>
            <person name="Shiohata N."/>
            <person name="Sano S."/>
            <person name="Moriya S."/>
            <person name="Momiyama H."/>
            <person name="Satoh N."/>
            <person name="Takami S."/>
            <person name="Terashima Y."/>
            <person name="Suzuki O."/>
            <person name="Nakagawa S."/>
            <person name="Senoh A."/>
            <person name="Mizoguchi H."/>
            <person name="Goto Y."/>
            <person name="Shimizu F."/>
            <person name="Wakebe H."/>
            <person name="Hishigaki H."/>
            <person name="Watanabe T."/>
            <person name="Sugiyama A."/>
            <person name="Takemoto M."/>
            <person name="Kawakami B."/>
            <person name="Yamazaki M."/>
            <person name="Watanabe K."/>
            <person name="Kumagai A."/>
            <person name="Itakura S."/>
            <person name="Fukuzumi Y."/>
            <person name="Fujimori Y."/>
            <person name="Komiyama M."/>
            <person name="Tashiro H."/>
            <person name="Tanigami A."/>
            <person name="Fujiwara T."/>
            <person name="Ono T."/>
            <person name="Yamada K."/>
            <person name="Fujii Y."/>
            <person name="Ozaki K."/>
            <person name="Hirao M."/>
            <person name="Ohmori Y."/>
            <person name="Kawabata A."/>
            <person name="Hikiji T."/>
            <person name="Kobatake N."/>
            <person name="Inagaki H."/>
            <person name="Ikema Y."/>
            <person name="Okamoto S."/>
            <person name="Okitani R."/>
            <person name="Kawakami T."/>
            <person name="Noguchi S."/>
            <person name="Itoh T."/>
            <person name="Shigeta K."/>
            <person name="Senba T."/>
            <person name="Matsumura K."/>
            <person name="Nakajima Y."/>
            <person name="Mizuno T."/>
            <person name="Morinaga M."/>
            <person name="Sasaki M."/>
            <person name="Togashi T."/>
            <person name="Oyama M."/>
            <person name="Hata H."/>
            <person name="Watanabe M."/>
            <person name="Komatsu T."/>
            <person name="Mizushima-Sugano J."/>
            <person name="Satoh T."/>
            <person name="Shirai Y."/>
            <person name="Takahashi Y."/>
            <person name="Nakagawa K."/>
            <person name="Okumura K."/>
            <person name="Nagase T."/>
            <person name="Nomura N."/>
            <person name="Kikuchi H."/>
            <person name="Masuho Y."/>
            <person name="Yamashita R."/>
            <person name="Nakai K."/>
            <person name="Yada T."/>
            <person name="Nakamura Y."/>
            <person name="Ohara O."/>
            <person name="Isogai T."/>
            <person name="Sugano S."/>
        </authorList>
    </citation>
    <scope>NUCLEOTIDE SEQUENCE [LARGE SCALE MRNA]</scope>
    <source>
        <tissue>Brain</tissue>
    </source>
</reference>
<reference key="4">
    <citation type="journal article" date="2005" name="Nature">
        <title>Generation and annotation of the DNA sequences of human chromosomes 2 and 4.</title>
        <authorList>
            <person name="Hillier L.W."/>
            <person name="Graves T.A."/>
            <person name="Fulton R.S."/>
            <person name="Fulton L.A."/>
            <person name="Pepin K.H."/>
            <person name="Minx P."/>
            <person name="Wagner-McPherson C."/>
            <person name="Layman D."/>
            <person name="Wylie K."/>
            <person name="Sekhon M."/>
            <person name="Becker M.C."/>
            <person name="Fewell G.A."/>
            <person name="Delehaunty K.D."/>
            <person name="Miner T.L."/>
            <person name="Nash W.E."/>
            <person name="Kremitzki C."/>
            <person name="Oddy L."/>
            <person name="Du H."/>
            <person name="Sun H."/>
            <person name="Bradshaw-Cordum H."/>
            <person name="Ali J."/>
            <person name="Carter J."/>
            <person name="Cordes M."/>
            <person name="Harris A."/>
            <person name="Isak A."/>
            <person name="van Brunt A."/>
            <person name="Nguyen C."/>
            <person name="Du F."/>
            <person name="Courtney L."/>
            <person name="Kalicki J."/>
            <person name="Ozersky P."/>
            <person name="Abbott S."/>
            <person name="Armstrong J."/>
            <person name="Belter E.A."/>
            <person name="Caruso L."/>
            <person name="Cedroni M."/>
            <person name="Cotton M."/>
            <person name="Davidson T."/>
            <person name="Desai A."/>
            <person name="Elliott G."/>
            <person name="Erb T."/>
            <person name="Fronick C."/>
            <person name="Gaige T."/>
            <person name="Haakenson W."/>
            <person name="Haglund K."/>
            <person name="Holmes A."/>
            <person name="Harkins R."/>
            <person name="Kim K."/>
            <person name="Kruchowski S.S."/>
            <person name="Strong C.M."/>
            <person name="Grewal N."/>
            <person name="Goyea E."/>
            <person name="Hou S."/>
            <person name="Levy A."/>
            <person name="Martinka S."/>
            <person name="Mead K."/>
            <person name="McLellan M.D."/>
            <person name="Meyer R."/>
            <person name="Randall-Maher J."/>
            <person name="Tomlinson C."/>
            <person name="Dauphin-Kohlberg S."/>
            <person name="Kozlowicz-Reilly A."/>
            <person name="Shah N."/>
            <person name="Swearengen-Shahid S."/>
            <person name="Snider J."/>
            <person name="Strong J.T."/>
            <person name="Thompson J."/>
            <person name="Yoakum M."/>
            <person name="Leonard S."/>
            <person name="Pearman C."/>
            <person name="Trani L."/>
            <person name="Radionenko M."/>
            <person name="Waligorski J.E."/>
            <person name="Wang C."/>
            <person name="Rock S.M."/>
            <person name="Tin-Wollam A.-M."/>
            <person name="Maupin R."/>
            <person name="Latreille P."/>
            <person name="Wendl M.C."/>
            <person name="Yang S.-P."/>
            <person name="Pohl C."/>
            <person name="Wallis J.W."/>
            <person name="Spieth J."/>
            <person name="Bieri T.A."/>
            <person name="Berkowicz N."/>
            <person name="Nelson J.O."/>
            <person name="Osborne J."/>
            <person name="Ding L."/>
            <person name="Meyer R."/>
            <person name="Sabo A."/>
            <person name="Shotland Y."/>
            <person name="Sinha P."/>
            <person name="Wohldmann P.E."/>
            <person name="Cook L.L."/>
            <person name="Hickenbotham M.T."/>
            <person name="Eldred J."/>
            <person name="Williams D."/>
            <person name="Jones T.A."/>
            <person name="She X."/>
            <person name="Ciccarelli F.D."/>
            <person name="Izaurralde E."/>
            <person name="Taylor J."/>
            <person name="Schmutz J."/>
            <person name="Myers R.M."/>
            <person name="Cox D.R."/>
            <person name="Huang X."/>
            <person name="McPherson J.D."/>
            <person name="Mardis E.R."/>
            <person name="Clifton S.W."/>
            <person name="Warren W.C."/>
            <person name="Chinwalla A.T."/>
            <person name="Eddy S.R."/>
            <person name="Marra M.A."/>
            <person name="Ovcharenko I."/>
            <person name="Furey T.S."/>
            <person name="Miller W."/>
            <person name="Eichler E.E."/>
            <person name="Bork P."/>
            <person name="Suyama M."/>
            <person name="Torrents D."/>
            <person name="Waterston R.H."/>
            <person name="Wilson R.K."/>
        </authorList>
    </citation>
    <scope>NUCLEOTIDE SEQUENCE [LARGE SCALE GENOMIC DNA]</scope>
</reference>
<reference key="5">
    <citation type="journal article" date="2004" name="Genome Res.">
        <title>The status, quality, and expansion of the NIH full-length cDNA project: the Mammalian Gene Collection (MGC).</title>
        <authorList>
            <consortium name="The MGC Project Team"/>
        </authorList>
    </citation>
    <scope>NUCLEOTIDE SEQUENCE [LARGE SCALE MRNA]</scope>
    <source>
        <tissue>Testis</tissue>
    </source>
</reference>
<keyword id="KW-0238">DNA-binding</keyword>
<keyword id="KW-0539">Nucleus</keyword>
<keyword id="KW-1185">Reference proteome</keyword>
<keyword id="KW-0804">Transcription</keyword>
<keyword id="KW-0805">Transcription regulation</keyword>